<protein>
    <recommendedName>
        <fullName evidence="9">Cystatin cpi-2</fullName>
    </recommendedName>
</protein>
<evidence type="ECO:0000250" key="1">
    <source>
        <dbReference type="UniProtKB" id="P01038"/>
    </source>
</evidence>
<evidence type="ECO:0000255" key="2"/>
<evidence type="ECO:0000255" key="3">
    <source>
        <dbReference type="PROSITE-ProRule" id="PRU00498"/>
    </source>
</evidence>
<evidence type="ECO:0000255" key="4">
    <source>
        <dbReference type="RuleBase" id="RU362130"/>
    </source>
</evidence>
<evidence type="ECO:0000269" key="5">
    <source>
    </source>
</evidence>
<evidence type="ECO:0000269" key="6">
    <source>
    </source>
</evidence>
<evidence type="ECO:0000269" key="7">
    <source>
    </source>
</evidence>
<evidence type="ECO:0000303" key="8">
    <source>
    </source>
</evidence>
<evidence type="ECO:0000305" key="9"/>
<evidence type="ECO:0000305" key="10">
    <source>
    </source>
</evidence>
<evidence type="ECO:0000312" key="11">
    <source>
        <dbReference type="EMBL" id="AAB69857.1"/>
    </source>
</evidence>
<evidence type="ECO:0000312" key="12">
    <source>
        <dbReference type="EMBL" id="AAD51086.1"/>
    </source>
</evidence>
<evidence type="ECO:0000312" key="13">
    <source>
        <dbReference type="Proteomes" id="UP000006672"/>
    </source>
</evidence>
<organism evidence="13">
    <name type="scientific">Brugia malayi</name>
    <name type="common">Filarial nematode worm</name>
    <dbReference type="NCBI Taxonomy" id="6279"/>
    <lineage>
        <taxon>Eukaryota</taxon>
        <taxon>Metazoa</taxon>
        <taxon>Ecdysozoa</taxon>
        <taxon>Nematoda</taxon>
        <taxon>Chromadorea</taxon>
        <taxon>Rhabditida</taxon>
        <taxon>Spirurina</taxon>
        <taxon>Spiruromorpha</taxon>
        <taxon>Filarioidea</taxon>
        <taxon>Onchocercidae</taxon>
        <taxon>Brugia</taxon>
    </lineage>
</organism>
<accession>A0A0K0IP23</accession>
<accession>O16159</accession>
<keyword id="KW-1015">Disulfide bond</keyword>
<keyword id="KW-0325">Glycoprotein</keyword>
<keyword id="KW-0646">Protease inhibitor</keyword>
<keyword id="KW-1185">Reference proteome</keyword>
<keyword id="KW-0732">Signal</keyword>
<keyword id="KW-0789">Thiol protease inhibitor</keyword>
<proteinExistence type="evidence at protein level"/>
<reference evidence="11" key="1">
    <citation type="journal article" date="1997" name="Mol. Biochem. Parasitol.">
        <title>Differentially expressed, abundant trans-spliced cDNAs from larval Brugia malayi.</title>
        <authorList>
            <person name="Gregory W.F."/>
            <person name="Blaxter M.L."/>
            <person name="Maizels R.M."/>
        </authorList>
    </citation>
    <scope>NUCLEOTIDE SEQUENCE [MRNA]</scope>
</reference>
<reference evidence="12" key="2">
    <citation type="submission" date="1999-08" db="EMBL/GenBank/DDBJ databases">
        <title>Two distinct cystatin-type cysteine protease inhibitors from the parasitic nematode Brugia malayi.</title>
        <authorList>
            <person name="Gregory W.F."/>
            <person name="Maizels R.M."/>
        </authorList>
    </citation>
    <scope>NUCLEOTIDE SEQUENCE [GENOMIC DNA]</scope>
</reference>
<reference evidence="13" key="3">
    <citation type="journal article" date="2007" name="Science">
        <title>Draft genome of the filarial nematode parasite Brugia malayi.</title>
        <authorList>
            <person name="Ghedin E."/>
            <person name="Wang S."/>
            <person name="Spiro D."/>
            <person name="Caler E."/>
            <person name="Zhao Q."/>
            <person name="Crabtree J."/>
            <person name="Allen J.E."/>
            <person name="Delcher A.L."/>
            <person name="Guiliano D.B."/>
            <person name="Miranda-Saavedra D."/>
            <person name="Angiuoli S.V."/>
            <person name="Creasy T."/>
            <person name="Amedeo P."/>
            <person name="Haas B."/>
            <person name="El-Sayed N.M."/>
            <person name="Wortman J.R."/>
            <person name="Feldblyum T."/>
            <person name="Tallon L."/>
            <person name="Schatz M."/>
            <person name="Shumway M."/>
            <person name="Koo H."/>
            <person name="Salzberg S.L."/>
            <person name="Schobel S."/>
            <person name="Pertea M."/>
            <person name="Pop M."/>
            <person name="White O."/>
            <person name="Barton G.J."/>
            <person name="Carlow C.K.S."/>
            <person name="Crawford M.J."/>
            <person name="Daub J."/>
            <person name="Dimmic M.W."/>
            <person name="Estes C.F."/>
            <person name="Foster J.M."/>
            <person name="Ganatra M."/>
            <person name="Gregory W.F."/>
            <person name="Johnson N.M."/>
            <person name="Jin J."/>
            <person name="Komuniecki R."/>
            <person name="Korf I."/>
            <person name="Kumar S."/>
            <person name="Laney S."/>
            <person name="Li B.-W."/>
            <person name="Li W."/>
            <person name="Lindblom T.H."/>
            <person name="Lustigman S."/>
            <person name="Ma D."/>
            <person name="Maina C.V."/>
            <person name="Martin D.M."/>
            <person name="McCarter J.P."/>
            <person name="McReynolds L."/>
            <person name="Mitreva M."/>
            <person name="Nutman T.B."/>
            <person name="Parkinson J."/>
            <person name="Peregrin-Alvarez J.M."/>
            <person name="Poole C."/>
            <person name="Ren Q."/>
            <person name="Saunders L."/>
            <person name="Sluder A.E."/>
            <person name="Smith K."/>
            <person name="Stanke M."/>
            <person name="Unnasch T.R."/>
            <person name="Ware J."/>
            <person name="Wei A.D."/>
            <person name="Weil G."/>
            <person name="Williams D.J."/>
            <person name="Zhang Y."/>
            <person name="Williams S.A."/>
            <person name="Fraser-Liggett C."/>
            <person name="Slatko B."/>
            <person name="Blaxter M.L."/>
            <person name="Scott A.L."/>
        </authorList>
    </citation>
    <scope>NUCLEOTIDE SEQUENCE</scope>
    <source>
        <strain evidence="13">FR3</strain>
    </source>
</reference>
<reference evidence="9" key="4">
    <citation type="journal article" date="2001" name="Curr. Biol.">
        <title>Bm-CPI-2, a cystatin homolog secreted by the filarial parasite Brugia malayi, inhibits class II MHC-restricted antigen processing.</title>
        <authorList>
            <person name="Manoury B."/>
            <person name="Gregory W.F."/>
            <person name="Maizels R.M."/>
            <person name="Watts C."/>
        </authorList>
    </citation>
    <scope>FUNCTION</scope>
</reference>
<reference evidence="9" key="5">
    <citation type="journal article" date="2005" name="Mol. Biochem. Parasitol.">
        <title>Bm-CPI-2, a cystatin from Brugia malayi nematode parasites, differs from Caenorhabditis elegans cystatins in a specific site mediating inhibition of the antigen-processing enzyme AEP.</title>
        <authorList>
            <person name="Murray J."/>
            <person name="Manoury B."/>
            <person name="Balic A."/>
            <person name="Watts C."/>
            <person name="Maizels R.M."/>
        </authorList>
    </citation>
    <scope>FUNCTION</scope>
    <scope>MOTIF</scope>
    <scope>MUTAGENESIS OF ASN-77</scope>
</reference>
<reference evidence="9" key="6">
    <citation type="journal article" date="2008" name="Int. J. Biochem. Cell Biol.">
        <title>Cystatins from filarial parasites: evolution, adaptation and function in the host-parasite relationship.</title>
        <authorList>
            <person name="Gregory W.F."/>
            <person name="Maizels R.M."/>
        </authorList>
    </citation>
    <scope>DEVELOPMENTAL STAGE</scope>
</reference>
<dbReference type="EMBL" id="AF015263">
    <property type="protein sequence ID" value="AAB69857.1"/>
    <property type="molecule type" value="mRNA"/>
</dbReference>
<dbReference type="EMBL" id="AF177193">
    <property type="protein sequence ID" value="AAD51086.1"/>
    <property type="molecule type" value="Genomic_DNA"/>
</dbReference>
<dbReference type="SMR" id="A0A0K0IP23"/>
<dbReference type="FunCoup" id="A0A0K0IP23">
    <property type="interactions" value="94"/>
</dbReference>
<dbReference type="STRING" id="6279.A0A0K0IP23"/>
<dbReference type="MEROPS" id="I25.044"/>
<dbReference type="GlyCosmos" id="A0A0K0IP23">
    <property type="glycosylation" value="1 site, No reported glycans"/>
</dbReference>
<dbReference type="EnsemblMetazoa" id="Bm10669a.1">
    <property type="protein sequence ID" value="Bm10669a.1"/>
    <property type="gene ID" value="WBGene00230930"/>
</dbReference>
<dbReference type="InParanoid" id="A0A0K0IP23"/>
<dbReference type="OrthoDB" id="110606at2759"/>
<dbReference type="Proteomes" id="UP000006672">
    <property type="component" value="Unassembled WGS sequence"/>
</dbReference>
<dbReference type="GO" id="GO:0005737">
    <property type="term" value="C:cytoplasm"/>
    <property type="evidence" value="ECO:0007669"/>
    <property type="project" value="TreeGrafter"/>
</dbReference>
<dbReference type="GO" id="GO:0005615">
    <property type="term" value="C:extracellular space"/>
    <property type="evidence" value="ECO:0007669"/>
    <property type="project" value="TreeGrafter"/>
</dbReference>
<dbReference type="GO" id="GO:0031982">
    <property type="term" value="C:vesicle"/>
    <property type="evidence" value="ECO:0007669"/>
    <property type="project" value="TreeGrafter"/>
</dbReference>
<dbReference type="GO" id="GO:0019828">
    <property type="term" value="F:aspartic-type endopeptidase inhibitor activity"/>
    <property type="evidence" value="ECO:0000314"/>
    <property type="project" value="UniProtKB"/>
</dbReference>
<dbReference type="GO" id="GO:0004869">
    <property type="term" value="F:cysteine-type endopeptidase inhibitor activity"/>
    <property type="evidence" value="ECO:0000314"/>
    <property type="project" value="UniProtKB"/>
</dbReference>
<dbReference type="CDD" id="cd00042">
    <property type="entry name" value="CY"/>
    <property type="match status" value="1"/>
</dbReference>
<dbReference type="FunFam" id="3.10.450.10:FF:000027">
    <property type="entry name" value="Cystatin cpi-2"/>
    <property type="match status" value="1"/>
</dbReference>
<dbReference type="Gene3D" id="3.10.450.10">
    <property type="match status" value="1"/>
</dbReference>
<dbReference type="InterPro" id="IPR000010">
    <property type="entry name" value="Cystatin_dom"/>
</dbReference>
<dbReference type="InterPro" id="IPR046350">
    <property type="entry name" value="Cystatin_sf"/>
</dbReference>
<dbReference type="InterPro" id="IPR018073">
    <property type="entry name" value="Prot_inh_cystat_CS"/>
</dbReference>
<dbReference type="PANTHER" id="PTHR46186">
    <property type="entry name" value="CYSTATIN"/>
    <property type="match status" value="1"/>
</dbReference>
<dbReference type="PANTHER" id="PTHR46186:SF2">
    <property type="entry name" value="CYSTATIN"/>
    <property type="match status" value="1"/>
</dbReference>
<dbReference type="Pfam" id="PF00031">
    <property type="entry name" value="Cystatin"/>
    <property type="match status" value="1"/>
</dbReference>
<dbReference type="SMART" id="SM00043">
    <property type="entry name" value="CY"/>
    <property type="match status" value="1"/>
</dbReference>
<dbReference type="SUPFAM" id="SSF54403">
    <property type="entry name" value="Cystatin/monellin"/>
    <property type="match status" value="1"/>
</dbReference>
<dbReference type="PROSITE" id="PS00287">
    <property type="entry name" value="CYSTATIN"/>
    <property type="match status" value="1"/>
</dbReference>
<comment type="function">
    <text evidence="5 6">Cysteine protease inhibitor which inhibits members of the peptidase C1 family. Also acts as an asparaginyl endopeptidase inhibitor (PubMed:11301256, PubMed:15664654). In the human host, inhibits CTSL/cathepsin L, CTSS/cathepsin S, CTSB/cathepsin B and asparaginyl endopeptidase LGMN/AEP which may cause defects in both antigen and MHC class II invariant chain CD74/Ii processing (PubMed:11301256).</text>
</comment>
<comment type="developmental stage">
    <text evidence="7">Expressed in all life cycle stages.</text>
</comment>
<comment type="similarity">
    <text evidence="2 4">Belongs to the cystatin family.</text>
</comment>
<feature type="signal peptide" evidence="2">
    <location>
        <begin position="1"/>
        <end position="25"/>
    </location>
</feature>
<feature type="chain" id="PRO_5008442636" description="Cystatin cpi-2" evidence="2">
    <location>
        <begin position="26"/>
        <end position="161"/>
    </location>
</feature>
<feature type="short sequence motif" description="Important for interaction with host LGMN" evidence="10">
    <location>
        <begin position="76"/>
        <end position="78"/>
    </location>
</feature>
<feature type="short sequence motif" description="Secondary area of contact" evidence="9">
    <location>
        <begin position="93"/>
        <end position="97"/>
    </location>
</feature>
<feature type="site" description="Reactive site" evidence="9">
    <location>
        <position position="49"/>
    </location>
</feature>
<feature type="glycosylation site" description="N-linked (GlcNAc...) asparagine" evidence="3">
    <location>
        <position position="89"/>
    </location>
</feature>
<feature type="disulfide bond" evidence="1">
    <location>
        <begin position="111"/>
        <end position="124"/>
    </location>
</feature>
<feature type="mutagenesis site" description="Reduces inhibition of human LGMN/AEP without affecting the catalytic activity of cathepsins CTSL, CTSS and CTSB." evidence="6">
    <original>N</original>
    <variation>D</variation>
    <location>
        <position position="77"/>
    </location>
</feature>
<feature type="mutagenesis site" description="Abolishes inhibition of human LGMN/AEP without affecting the catalytic activity of cathepsins CTSL, CTSS and CTSB." evidence="6">
    <original>N</original>
    <variation>K</variation>
    <location>
        <position position="77"/>
    </location>
</feature>
<feature type="sequence conflict" description="In Ref. 1; AAB69857/AAD51086." evidence="9" ref="1">
    <original>N</original>
    <variation>K</variation>
    <location>
        <position position="89"/>
    </location>
</feature>
<gene>
    <name evidence="8" type="primary">cpi-2</name>
</gene>
<name>CPI2_BRUMA</name>
<sequence length="161" mass="18392">MMSTMSIKEGLLVILLSLFLFDTTALIHRREIPHMESKGQMQRGQVLLGGWQERSPEDNEILELLPSVLTKVNQQSNDEYHLMPIKLLNVSSQVVAGVKYKMEVQVARSECKKSASEQVNLKTCKKLEGHPDQVMTLEVWEKPWEDFLQVNILETKVLSSV</sequence>